<feature type="chain" id="PRO_1000023110" description="UDP-N-acetylglucosamine 1-carboxyvinyltransferase">
    <location>
        <begin position="1"/>
        <end position="419"/>
    </location>
</feature>
<feature type="active site" description="Proton donor" evidence="1">
    <location>
        <position position="115"/>
    </location>
</feature>
<feature type="binding site" evidence="1">
    <location>
        <begin position="22"/>
        <end position="23"/>
    </location>
    <ligand>
        <name>phosphoenolpyruvate</name>
        <dbReference type="ChEBI" id="CHEBI:58702"/>
    </ligand>
</feature>
<feature type="binding site" evidence="1">
    <location>
        <position position="91"/>
    </location>
    <ligand>
        <name>UDP-N-acetyl-alpha-D-glucosamine</name>
        <dbReference type="ChEBI" id="CHEBI:57705"/>
    </ligand>
</feature>
<feature type="binding site" evidence="1">
    <location>
        <begin position="120"/>
        <end position="124"/>
    </location>
    <ligand>
        <name>UDP-N-acetyl-alpha-D-glucosamine</name>
        <dbReference type="ChEBI" id="CHEBI:57705"/>
    </ligand>
</feature>
<feature type="binding site" evidence="1">
    <location>
        <begin position="160"/>
        <end position="163"/>
    </location>
    <ligand>
        <name>UDP-N-acetyl-alpha-D-glucosamine</name>
        <dbReference type="ChEBI" id="CHEBI:57705"/>
    </ligand>
</feature>
<feature type="binding site" evidence="1">
    <location>
        <position position="305"/>
    </location>
    <ligand>
        <name>UDP-N-acetyl-alpha-D-glucosamine</name>
        <dbReference type="ChEBI" id="CHEBI:57705"/>
    </ligand>
</feature>
<feature type="binding site" evidence="1">
    <location>
        <position position="327"/>
    </location>
    <ligand>
        <name>UDP-N-acetyl-alpha-D-glucosamine</name>
        <dbReference type="ChEBI" id="CHEBI:57705"/>
    </ligand>
</feature>
<feature type="modified residue" description="2-(S-cysteinyl)pyruvic acid O-phosphothioketal" evidence="1">
    <location>
        <position position="115"/>
    </location>
</feature>
<reference key="1">
    <citation type="journal article" date="2006" name="Genome Res.">
        <title>Massive genome erosion and functional adaptations provide insights into the symbiotic lifestyle of Sodalis glossinidius in the tsetse host.</title>
        <authorList>
            <person name="Toh H."/>
            <person name="Weiss B.L."/>
            <person name="Perkin S.A.H."/>
            <person name="Yamashita A."/>
            <person name="Oshima K."/>
            <person name="Hattori M."/>
            <person name="Aksoy S."/>
        </authorList>
    </citation>
    <scope>NUCLEOTIDE SEQUENCE [LARGE SCALE GENOMIC DNA]</scope>
    <source>
        <strain>morsitans</strain>
    </source>
</reference>
<sequence length="419" mass="44548">MDKFCVQGPTRLSGEVTISGAKNAALPILFAALLAEEPVEIQNVPKLKDIDTTMKLLGQLGARVERNGSVHVDASDVDVYCAPYELVKTMRASIWALGPLVARFGQGQVSLPGGCAIGARPVDLHISGLEQLGATIKLEEGYVKASVDGRLRGAHIVMDKVSVGATITIMSAATLATGTTIIENAAREPEIVDTANFLITLGAKISGAGTDKITIEGVERLGGGVYRVLPDRIETGTFLVAAAISRGRVVCHATRPDTLDAVLAKLREAGADIAVGDDWISLDMHGQRPKAVTVRTAPHPGFPTDMQAQFSLLNLVADGTGVITETIFENRFMHVPELIRMGAHAEIESNTVICHGVETLSGAQVMATDLRASASLVLAGCIAEGVTVVDRIYHIDRGYDCIEEKLRRMGANIERIRGE</sequence>
<keyword id="KW-0131">Cell cycle</keyword>
<keyword id="KW-0132">Cell division</keyword>
<keyword id="KW-0133">Cell shape</keyword>
<keyword id="KW-0961">Cell wall biogenesis/degradation</keyword>
<keyword id="KW-0963">Cytoplasm</keyword>
<keyword id="KW-0573">Peptidoglycan synthesis</keyword>
<keyword id="KW-0670">Pyruvate</keyword>
<keyword id="KW-0808">Transferase</keyword>
<proteinExistence type="inferred from homology"/>
<organism>
    <name type="scientific">Sodalis glossinidius (strain morsitans)</name>
    <dbReference type="NCBI Taxonomy" id="343509"/>
    <lineage>
        <taxon>Bacteria</taxon>
        <taxon>Pseudomonadati</taxon>
        <taxon>Pseudomonadota</taxon>
        <taxon>Gammaproteobacteria</taxon>
        <taxon>Enterobacterales</taxon>
        <taxon>Bruguierivoracaceae</taxon>
        <taxon>Sodalis</taxon>
    </lineage>
</organism>
<comment type="function">
    <text evidence="1">Cell wall formation. Adds enolpyruvyl to UDP-N-acetylglucosamine.</text>
</comment>
<comment type="catalytic activity">
    <reaction evidence="1">
        <text>phosphoenolpyruvate + UDP-N-acetyl-alpha-D-glucosamine = UDP-N-acetyl-3-O-(1-carboxyvinyl)-alpha-D-glucosamine + phosphate</text>
        <dbReference type="Rhea" id="RHEA:18681"/>
        <dbReference type="ChEBI" id="CHEBI:43474"/>
        <dbReference type="ChEBI" id="CHEBI:57705"/>
        <dbReference type="ChEBI" id="CHEBI:58702"/>
        <dbReference type="ChEBI" id="CHEBI:68483"/>
        <dbReference type="EC" id="2.5.1.7"/>
    </reaction>
</comment>
<comment type="pathway">
    <text evidence="1">Cell wall biogenesis; peptidoglycan biosynthesis.</text>
</comment>
<comment type="subcellular location">
    <subcellularLocation>
        <location evidence="1">Cytoplasm</location>
    </subcellularLocation>
</comment>
<comment type="similarity">
    <text evidence="1">Belongs to the EPSP synthase family. MurA subfamily.</text>
</comment>
<gene>
    <name evidence="1" type="primary">murA</name>
    <name type="ordered locus">SG0211</name>
</gene>
<dbReference type="EC" id="2.5.1.7" evidence="1"/>
<dbReference type="EMBL" id="AP008232">
    <property type="protein sequence ID" value="BAE73486.1"/>
    <property type="molecule type" value="Genomic_DNA"/>
</dbReference>
<dbReference type="RefSeq" id="WP_011410075.1">
    <property type="nucleotide sequence ID" value="NC_007712.1"/>
</dbReference>
<dbReference type="SMR" id="Q2NWI9"/>
<dbReference type="STRING" id="343509.SG0211"/>
<dbReference type="KEGG" id="sgl:SG0211"/>
<dbReference type="eggNOG" id="COG0766">
    <property type="taxonomic scope" value="Bacteria"/>
</dbReference>
<dbReference type="HOGENOM" id="CLU_027387_0_0_6"/>
<dbReference type="OrthoDB" id="9803760at2"/>
<dbReference type="BioCyc" id="SGLO343509:SGP1_RS01970-MONOMER"/>
<dbReference type="UniPathway" id="UPA00219"/>
<dbReference type="Proteomes" id="UP000001932">
    <property type="component" value="Chromosome"/>
</dbReference>
<dbReference type="GO" id="GO:0005737">
    <property type="term" value="C:cytoplasm"/>
    <property type="evidence" value="ECO:0007669"/>
    <property type="project" value="UniProtKB-SubCell"/>
</dbReference>
<dbReference type="GO" id="GO:0008760">
    <property type="term" value="F:UDP-N-acetylglucosamine 1-carboxyvinyltransferase activity"/>
    <property type="evidence" value="ECO:0007669"/>
    <property type="project" value="UniProtKB-UniRule"/>
</dbReference>
<dbReference type="GO" id="GO:0051301">
    <property type="term" value="P:cell division"/>
    <property type="evidence" value="ECO:0007669"/>
    <property type="project" value="UniProtKB-KW"/>
</dbReference>
<dbReference type="GO" id="GO:0071555">
    <property type="term" value="P:cell wall organization"/>
    <property type="evidence" value="ECO:0007669"/>
    <property type="project" value="UniProtKB-KW"/>
</dbReference>
<dbReference type="GO" id="GO:0009252">
    <property type="term" value="P:peptidoglycan biosynthetic process"/>
    <property type="evidence" value="ECO:0007669"/>
    <property type="project" value="UniProtKB-UniRule"/>
</dbReference>
<dbReference type="GO" id="GO:0008360">
    <property type="term" value="P:regulation of cell shape"/>
    <property type="evidence" value="ECO:0007669"/>
    <property type="project" value="UniProtKB-KW"/>
</dbReference>
<dbReference type="GO" id="GO:0019277">
    <property type="term" value="P:UDP-N-acetylgalactosamine biosynthetic process"/>
    <property type="evidence" value="ECO:0007669"/>
    <property type="project" value="InterPro"/>
</dbReference>
<dbReference type="CDD" id="cd01555">
    <property type="entry name" value="UdpNAET"/>
    <property type="match status" value="1"/>
</dbReference>
<dbReference type="FunFam" id="3.65.10.10:FF:000001">
    <property type="entry name" value="UDP-N-acetylglucosamine 1-carboxyvinyltransferase"/>
    <property type="match status" value="1"/>
</dbReference>
<dbReference type="Gene3D" id="3.65.10.10">
    <property type="entry name" value="Enolpyruvate transferase domain"/>
    <property type="match status" value="2"/>
</dbReference>
<dbReference type="HAMAP" id="MF_00111">
    <property type="entry name" value="MurA"/>
    <property type="match status" value="1"/>
</dbReference>
<dbReference type="InterPro" id="IPR001986">
    <property type="entry name" value="Enolpyruvate_Tfrase_dom"/>
</dbReference>
<dbReference type="InterPro" id="IPR036968">
    <property type="entry name" value="Enolpyruvate_Tfrase_sf"/>
</dbReference>
<dbReference type="InterPro" id="IPR050068">
    <property type="entry name" value="MurA_subfamily"/>
</dbReference>
<dbReference type="InterPro" id="IPR013792">
    <property type="entry name" value="RNA3'P_cycl/enolpyr_Trfase_a/b"/>
</dbReference>
<dbReference type="InterPro" id="IPR005750">
    <property type="entry name" value="UDP_GlcNAc_COvinyl_MurA"/>
</dbReference>
<dbReference type="NCBIfam" id="TIGR01072">
    <property type="entry name" value="murA"/>
    <property type="match status" value="1"/>
</dbReference>
<dbReference type="NCBIfam" id="NF006873">
    <property type="entry name" value="PRK09369.1"/>
    <property type="match status" value="1"/>
</dbReference>
<dbReference type="PANTHER" id="PTHR43783">
    <property type="entry name" value="UDP-N-ACETYLGLUCOSAMINE 1-CARBOXYVINYLTRANSFERASE"/>
    <property type="match status" value="1"/>
</dbReference>
<dbReference type="PANTHER" id="PTHR43783:SF1">
    <property type="entry name" value="UDP-N-ACETYLGLUCOSAMINE 1-CARBOXYVINYLTRANSFERASE"/>
    <property type="match status" value="1"/>
</dbReference>
<dbReference type="Pfam" id="PF00275">
    <property type="entry name" value="EPSP_synthase"/>
    <property type="match status" value="1"/>
</dbReference>
<dbReference type="SUPFAM" id="SSF55205">
    <property type="entry name" value="EPT/RTPC-like"/>
    <property type="match status" value="1"/>
</dbReference>
<protein>
    <recommendedName>
        <fullName evidence="1">UDP-N-acetylglucosamine 1-carboxyvinyltransferase</fullName>
        <ecNumber evidence="1">2.5.1.7</ecNumber>
    </recommendedName>
    <alternativeName>
        <fullName evidence="1">Enoylpyruvate transferase</fullName>
    </alternativeName>
    <alternativeName>
        <fullName evidence="1">UDP-N-acetylglucosamine enolpyruvyl transferase</fullName>
        <shortName evidence="1">EPT</shortName>
    </alternativeName>
</protein>
<accession>Q2NWI9</accession>
<name>MURA_SODGM</name>
<evidence type="ECO:0000255" key="1">
    <source>
        <dbReference type="HAMAP-Rule" id="MF_00111"/>
    </source>
</evidence>